<gene>
    <name evidence="9 13" type="primary">cyk-3</name>
    <name evidence="8" type="synonym">uch-1</name>
    <name evidence="13" type="ORF">ZK328.1</name>
</gene>
<comment type="function">
    <text evidence="5 6 7">Ubiquitin-protein hydrolase which cleaves ubiquitin from ubiquitinated proteins (PubMed:11683918, PubMed:12006614). Plays a role in embryo osmoregulation (PubMed:12006614). Probably by regulating osmosis, controls actin redistribution in the 1-cell embryos and thus actin-dependent processes such as cytokinesis and P-granules segregation (PubMed:11683918, PubMed:12006614). During the first embryonic mitotic division, involved in the formation of a functional microtubule organizing center provided by the male pronucleus (PubMed:11683918). Acts as a positive regulator of the mTORC1 signaling (PubMed:36476874).</text>
</comment>
<comment type="catalytic activity">
    <reaction evidence="5 6">
        <text>Thiol-dependent hydrolysis of ester, thioester, amide, peptide and isopeptide bonds formed by the C-terminal Gly of ubiquitin (a 76-residue protein attached to proteins as an intracellular targeting signal).</text>
        <dbReference type="EC" id="3.4.19.12"/>
    </reaction>
</comment>
<comment type="subcellular location">
    <subcellularLocation>
        <location evidence="5">Nucleus</location>
    </subcellularLocation>
    <subcellularLocation>
        <location evidence="5">Cytoplasm</location>
    </subcellularLocation>
    <subcellularLocation>
        <location evidence="5">Cytoplasm</location>
        <location evidence="5">Cytoskeleton</location>
        <location evidence="5">Microtubule organizing center</location>
    </subcellularLocation>
    <text evidence="5">At the 2-cell stage embryo, localizes to the microtubule organizing center during mitotic metaphase. Localizes to the cytoplasm in germ cells and sperm, and to the nucleus in oocytes.</text>
</comment>
<comment type="alternative products">
    <event type="alternative splicing"/>
    <isoform>
        <id>Q8WT44-1</id>
        <name evidence="13">b</name>
        <sequence type="displayed"/>
    </isoform>
    <isoform>
        <id>Q8WT44-2</id>
        <name evidence="12">a</name>
        <sequence type="described" ref="VSP_059638"/>
    </isoform>
</comment>
<comment type="tissue specificity">
    <text evidence="5">Expressed in excretory cells, coelomocytes, head neurons, hypodermal cells, germ cells, oocytes, sperm and pharynx (at protein level).</text>
</comment>
<comment type="developmental stage">
    <text evidence="5">Expressed in embryos and adults.</text>
</comment>
<comment type="disruption phenotype">
    <text evidence="5">RNAi-mediated knockdown causes embryonic lethality. Embryos have impaired cleavage after fertilization and a failure to form a functional paternal microtubule-organizing center (MTOC). Due to a lack of cytokinesis, embryos become multinucleated.</text>
</comment>
<comment type="miscellaneous">
    <text evidence="5">Binds Ca(2+).</text>
</comment>
<comment type="similarity">
    <text evidence="3">Belongs to the peptidase C19 family.</text>
</comment>
<proteinExistence type="evidence at protein level"/>
<organism>
    <name type="scientific">Caenorhabditis elegans</name>
    <dbReference type="NCBI Taxonomy" id="6239"/>
    <lineage>
        <taxon>Eukaryota</taxon>
        <taxon>Metazoa</taxon>
        <taxon>Ecdysozoa</taxon>
        <taxon>Nematoda</taxon>
        <taxon>Chromadorea</taxon>
        <taxon>Rhabditida</taxon>
        <taxon>Rhabditina</taxon>
        <taxon>Rhabditomorpha</taxon>
        <taxon>Rhabditoidea</taxon>
        <taxon>Rhabditidae</taxon>
        <taxon>Peloderinae</taxon>
        <taxon>Caenorhabditis</taxon>
    </lineage>
</organism>
<sequence>MGNTLTGRSNAIAPIISAEDAKTYISDEEYRRIRQAFQRFKNGCINYDEFCYHVLGGAQIPEEKRRLLFSFFSHGAETISFDNLLSSLVGLCRVEEVQSRFIEEYHEFASWGLSPPKLTIPLNDSYISFYEVMSYVTHLSVNEVIELEKVFATISDRAVCKLNEEKWKQALGGCFPDSYAERLFAVFDENRDGQIDFRELVCTLSALCRGPLPGRISQLARIWDVDCDKLLSDEELSNMYKDLNVPEEHQTVTKSSNGKSALVDFGIWAQENEKYVNEYYSMALQIGHICLGLRPESRKMELQIVNEFEKRASELPLSEWNIVASGWHAELRSFLEADKNPNPIDNSGIKGTREDSWTSKVACISAESARLKPDLIPSDYIRVPVPLWRAWLRWHGCALTVDSQFTRKYLDGEFFEDNKPALELYPLEILLLGHDRKKSQDGTENTPRSLTSWACAQVSRSMTVDELLALCKTELRLGDGDARLWQVVKENEEGNVLLDDGAQNLHQLYSSLGKTKKVNKMKLLLEVRERGTGVWPEELRASLSGKQITAASTLSSNAQLSDSSGRPGAVGLVNYGNFCYRNAGIQCLARVSPLTQYFLDEDNLDAIKRGNLRRGDAAETTIEYAKLLREMWAAKKKNIAPNDFNDAIRLSSDMFECSEQHDCQEFVAFLLDQLHTSMYESNKSLHPSPEESEGTDSNKLSDSSKKKEADKEEADEEKAERSWTEYEKQNESLVTQLFTGQLRSRLICRTCQSSSSVFEPFTSLSLPIGFEDVDLYQVIVVHRDGRIPRRYGFRLSRDSKVGNLREVVAVSSGISMSHLTIQCMSSKGTLMSRSPNHRSSNLRDELPLSSFPSGARLYALELPESTGEDQWRVAMHRKLQYNHEPYILGSTAGFIVSRFGLPLIVGLDEEVTGKKLYEDVMYQMHRFMEHSVNSSSSRAHDPCEDENSGYPFTLCLVDPNYEWCGQCPALRFCRGCPIRPDESKVFIPANCPIAVDWLPIALYLRYNHSQEQACEDDPSVAETWSRHFAPSSLEHCIEKFSCPETLDAAIQCDRCEKKTMRDKVMTIWKLPKYLIIHLKRFEFLREQGRMGKCKRTVNFPLKHFDPAPFVDKPDGNTYECIALANHYGQLSCGHFIAYAKSNEDKWLLLNDCSVREVSEEEVDKQGAYLLFYERKDVK</sequence>
<dbReference type="EC" id="3.4.19.12" evidence="5 6"/>
<dbReference type="EMBL" id="AF469173">
    <property type="protein sequence ID" value="AAL79016.1"/>
    <property type="molecule type" value="mRNA"/>
</dbReference>
<dbReference type="EMBL" id="BX284603">
    <property type="protein sequence ID" value="CCD70947.1"/>
    <property type="molecule type" value="Genomic_DNA"/>
</dbReference>
<dbReference type="EMBL" id="BX284603">
    <property type="protein sequence ID" value="CCD70948.1"/>
    <property type="molecule type" value="Genomic_DNA"/>
</dbReference>
<dbReference type="RefSeq" id="NP_001022992.1">
    <molecule id="Q8WT44-1"/>
    <property type="nucleotide sequence ID" value="NM_001027821.6"/>
</dbReference>
<dbReference type="RefSeq" id="NP_498311.2">
    <molecule id="Q8WT44-2"/>
    <property type="nucleotide sequence ID" value="NM_065910.6"/>
</dbReference>
<dbReference type="FunCoup" id="Q8WT44">
    <property type="interactions" value="2500"/>
</dbReference>
<dbReference type="IntAct" id="Q8WT44">
    <property type="interactions" value="3"/>
</dbReference>
<dbReference type="STRING" id="6239.ZK328.1b.1"/>
<dbReference type="MEROPS" id="C19.A44"/>
<dbReference type="PaxDb" id="6239-ZK328.1b"/>
<dbReference type="EnsemblMetazoa" id="ZK328.1a.1">
    <molecule id="Q8WT44-2"/>
    <property type="protein sequence ID" value="ZK328.1a.1"/>
    <property type="gene ID" value="WBGene00000874"/>
</dbReference>
<dbReference type="EnsemblMetazoa" id="ZK328.1b.1">
    <molecule id="Q8WT44-1"/>
    <property type="protein sequence ID" value="ZK328.1b.1"/>
    <property type="gene ID" value="WBGene00000874"/>
</dbReference>
<dbReference type="GeneID" id="175853"/>
<dbReference type="KEGG" id="cel:CELE_ZK328.1"/>
<dbReference type="UCSC" id="ZK328.1b">
    <molecule id="Q8WT44-1"/>
    <property type="organism name" value="c. elegans"/>
</dbReference>
<dbReference type="AGR" id="WB:WBGene00000874"/>
<dbReference type="CTD" id="175853"/>
<dbReference type="WormBase" id="ZK328.1a">
    <molecule id="Q8WT44-2"/>
    <property type="protein sequence ID" value="CE30061"/>
    <property type="gene ID" value="WBGene00000874"/>
    <property type="gene designation" value="cyk-3"/>
</dbReference>
<dbReference type="WormBase" id="ZK328.1b">
    <molecule id="Q8WT44-1"/>
    <property type="protein sequence ID" value="CE30062"/>
    <property type="gene ID" value="WBGene00000874"/>
    <property type="gene designation" value="cyk-3"/>
</dbReference>
<dbReference type="eggNOG" id="KOG1870">
    <property type="taxonomic scope" value="Eukaryota"/>
</dbReference>
<dbReference type="GeneTree" id="ENSGT00990000209826"/>
<dbReference type="HOGENOM" id="CLU_001060_10_1_1"/>
<dbReference type="InParanoid" id="Q8WT44"/>
<dbReference type="OMA" id="IWAQENE"/>
<dbReference type="OrthoDB" id="292964at2759"/>
<dbReference type="PhylomeDB" id="Q8WT44"/>
<dbReference type="CD-CODE" id="1E117272">
    <property type="entry name" value="Centrosome"/>
</dbReference>
<dbReference type="PRO" id="PR:Q8WT44"/>
<dbReference type="Proteomes" id="UP000001940">
    <property type="component" value="Chromosome III"/>
</dbReference>
<dbReference type="Bgee" id="WBGene00000874">
    <property type="expression patterns" value="Expressed in pharyngeal muscle cell (C elegans) and 4 other cell types or tissues"/>
</dbReference>
<dbReference type="GO" id="GO:0005737">
    <property type="term" value="C:cytoplasm"/>
    <property type="evidence" value="ECO:0000314"/>
    <property type="project" value="UniProtKB"/>
</dbReference>
<dbReference type="GO" id="GO:0005815">
    <property type="term" value="C:microtubule organizing center"/>
    <property type="evidence" value="ECO:0000314"/>
    <property type="project" value="UniProtKB"/>
</dbReference>
<dbReference type="GO" id="GO:0005634">
    <property type="term" value="C:nucleus"/>
    <property type="evidence" value="ECO:0007669"/>
    <property type="project" value="UniProtKB-SubCell"/>
</dbReference>
<dbReference type="GO" id="GO:0005509">
    <property type="term" value="F:calcium ion binding"/>
    <property type="evidence" value="ECO:0007669"/>
    <property type="project" value="InterPro"/>
</dbReference>
<dbReference type="GO" id="GO:0004843">
    <property type="term" value="F:cysteine-type deubiquitinase activity"/>
    <property type="evidence" value="ECO:0000314"/>
    <property type="project" value="UniProtKB"/>
</dbReference>
<dbReference type="GO" id="GO:0009792">
    <property type="term" value="P:embryo development ending in birth or egg hatching"/>
    <property type="evidence" value="ECO:0000315"/>
    <property type="project" value="UniProtKB"/>
</dbReference>
<dbReference type="GO" id="GO:0030010">
    <property type="term" value="P:establishment of cell polarity"/>
    <property type="evidence" value="ECO:0000315"/>
    <property type="project" value="UniProtKB"/>
</dbReference>
<dbReference type="GO" id="GO:0009992">
    <property type="term" value="P:intracellular water homeostasis"/>
    <property type="evidence" value="ECO:0000315"/>
    <property type="project" value="UniProtKB"/>
</dbReference>
<dbReference type="GO" id="GO:0031023">
    <property type="term" value="P:microtubule organizing center organization"/>
    <property type="evidence" value="ECO:0000315"/>
    <property type="project" value="UniProtKB"/>
</dbReference>
<dbReference type="GO" id="GO:1903673">
    <property type="term" value="P:mitotic cleavage furrow formation"/>
    <property type="evidence" value="ECO:0000315"/>
    <property type="project" value="UniProtKB"/>
</dbReference>
<dbReference type="GO" id="GO:1904263">
    <property type="term" value="P:positive regulation of TORC1 signaling"/>
    <property type="evidence" value="ECO:0000315"/>
    <property type="project" value="UniProtKB"/>
</dbReference>
<dbReference type="GO" id="GO:0016579">
    <property type="term" value="P:protein deubiquitination"/>
    <property type="evidence" value="ECO:0007669"/>
    <property type="project" value="InterPro"/>
</dbReference>
<dbReference type="GO" id="GO:0006508">
    <property type="term" value="P:proteolysis"/>
    <property type="evidence" value="ECO:0007669"/>
    <property type="project" value="UniProtKB-KW"/>
</dbReference>
<dbReference type="GO" id="GO:1904785">
    <property type="term" value="P:regulation of asymmetric protein localization involved in cell fate determination"/>
    <property type="evidence" value="ECO:0000315"/>
    <property type="project" value="UniProtKB"/>
</dbReference>
<dbReference type="CDD" id="cd02674">
    <property type="entry name" value="Peptidase_C19R"/>
    <property type="match status" value="1"/>
</dbReference>
<dbReference type="FunFam" id="1.10.238.10:FF:000464">
    <property type="entry name" value="Ubiquitin carboxyl-terminal hydrolase cyk-3"/>
    <property type="match status" value="1"/>
</dbReference>
<dbReference type="FunFam" id="3.30.2230.10:FF:000013">
    <property type="entry name" value="Ubiquitin carboxyl-terminal hydrolase cyk-3"/>
    <property type="match status" value="1"/>
</dbReference>
<dbReference type="FunFam" id="3.90.70.10:FF:000178">
    <property type="entry name" value="Ubiquitin carboxyl-terminal hydrolase cyk-3"/>
    <property type="match status" value="1"/>
</dbReference>
<dbReference type="FunFam" id="3.90.70.10:FF:000220">
    <property type="entry name" value="Ubiquitin carboxyl-terminal hydrolase cyk-3"/>
    <property type="match status" value="1"/>
</dbReference>
<dbReference type="Gene3D" id="3.90.70.10">
    <property type="entry name" value="Cysteine proteinases"/>
    <property type="match status" value="2"/>
</dbReference>
<dbReference type="Gene3D" id="3.30.2230.10">
    <property type="entry name" value="DUSP-like"/>
    <property type="match status" value="1"/>
</dbReference>
<dbReference type="Gene3D" id="1.10.238.10">
    <property type="entry name" value="EF-hand"/>
    <property type="match status" value="1"/>
</dbReference>
<dbReference type="InterPro" id="IPR035927">
    <property type="entry name" value="DUSP-like_sf"/>
</dbReference>
<dbReference type="InterPro" id="IPR011992">
    <property type="entry name" value="EF-hand-dom_pair"/>
</dbReference>
<dbReference type="InterPro" id="IPR018247">
    <property type="entry name" value="EF_Hand_1_Ca_BS"/>
</dbReference>
<dbReference type="InterPro" id="IPR002048">
    <property type="entry name" value="EF_hand_dom"/>
</dbReference>
<dbReference type="InterPro" id="IPR038765">
    <property type="entry name" value="Papain-like_cys_pep_sf"/>
</dbReference>
<dbReference type="InterPro" id="IPR006615">
    <property type="entry name" value="Pept_C19_DUSP"/>
</dbReference>
<dbReference type="InterPro" id="IPR001394">
    <property type="entry name" value="Peptidase_C19_UCH"/>
</dbReference>
<dbReference type="InterPro" id="IPR050185">
    <property type="entry name" value="Ub_carboxyl-term_hydrolase"/>
</dbReference>
<dbReference type="InterPro" id="IPR028889">
    <property type="entry name" value="USP_dom"/>
</dbReference>
<dbReference type="PANTHER" id="PTHR21646">
    <property type="entry name" value="UBIQUITIN CARBOXYL-TERMINAL HYDROLASE"/>
    <property type="match status" value="1"/>
</dbReference>
<dbReference type="PANTHER" id="PTHR21646:SF23">
    <property type="entry name" value="UBIQUITIN CARBOXYL-TERMINAL HYDROLASE USP2"/>
    <property type="match status" value="1"/>
</dbReference>
<dbReference type="Pfam" id="PF06337">
    <property type="entry name" value="DUSP"/>
    <property type="match status" value="1"/>
</dbReference>
<dbReference type="Pfam" id="PF00443">
    <property type="entry name" value="UCH"/>
    <property type="match status" value="1"/>
</dbReference>
<dbReference type="Pfam" id="PF25265">
    <property type="entry name" value="USP32_N"/>
    <property type="match status" value="1"/>
</dbReference>
<dbReference type="SMART" id="SM00695">
    <property type="entry name" value="DUSP"/>
    <property type="match status" value="1"/>
</dbReference>
<dbReference type="SMART" id="SM00054">
    <property type="entry name" value="EFh"/>
    <property type="match status" value="2"/>
</dbReference>
<dbReference type="SUPFAM" id="SSF54001">
    <property type="entry name" value="Cysteine proteinases"/>
    <property type="match status" value="1"/>
</dbReference>
<dbReference type="SUPFAM" id="SSF143791">
    <property type="entry name" value="DUSP-like"/>
    <property type="match status" value="1"/>
</dbReference>
<dbReference type="SUPFAM" id="SSF47473">
    <property type="entry name" value="EF-hand"/>
    <property type="match status" value="2"/>
</dbReference>
<dbReference type="PROSITE" id="PS51283">
    <property type="entry name" value="DUSP"/>
    <property type="match status" value="1"/>
</dbReference>
<dbReference type="PROSITE" id="PS00018">
    <property type="entry name" value="EF_HAND_1"/>
    <property type="match status" value="2"/>
</dbReference>
<dbReference type="PROSITE" id="PS50222">
    <property type="entry name" value="EF_HAND_2"/>
    <property type="match status" value="3"/>
</dbReference>
<dbReference type="PROSITE" id="PS50235">
    <property type="entry name" value="USP_3"/>
    <property type="match status" value="1"/>
</dbReference>
<name>UBPH_CAEEL</name>
<keyword id="KW-0025">Alternative splicing</keyword>
<keyword id="KW-0106">Calcium</keyword>
<keyword id="KW-0963">Cytoplasm</keyword>
<keyword id="KW-0206">Cytoskeleton</keyword>
<keyword id="KW-0378">Hydrolase</keyword>
<keyword id="KW-0479">Metal-binding</keyword>
<keyword id="KW-0539">Nucleus</keyword>
<keyword id="KW-0645">Protease</keyword>
<keyword id="KW-1185">Reference proteome</keyword>
<keyword id="KW-0677">Repeat</keyword>
<keyword id="KW-0788">Thiol protease</keyword>
<keyword id="KW-0833">Ubl conjugation pathway</keyword>
<evidence type="ECO:0000255" key="1">
    <source>
        <dbReference type="PROSITE-ProRule" id="PRU00448"/>
    </source>
</evidence>
<evidence type="ECO:0000255" key="2">
    <source>
        <dbReference type="PROSITE-ProRule" id="PRU00613"/>
    </source>
</evidence>
<evidence type="ECO:0000255" key="3">
    <source>
        <dbReference type="PROSITE-ProRule" id="PRU01035"/>
    </source>
</evidence>
<evidence type="ECO:0000256" key="4">
    <source>
        <dbReference type="SAM" id="MobiDB-lite"/>
    </source>
</evidence>
<evidence type="ECO:0000269" key="5">
    <source>
    </source>
</evidence>
<evidence type="ECO:0000269" key="6">
    <source>
    </source>
</evidence>
<evidence type="ECO:0000269" key="7">
    <source>
    </source>
</evidence>
<evidence type="ECO:0000303" key="8">
    <source>
    </source>
</evidence>
<evidence type="ECO:0000303" key="9">
    <source>
    </source>
</evidence>
<evidence type="ECO:0000305" key="10"/>
<evidence type="ECO:0000312" key="11">
    <source>
        <dbReference type="Proteomes" id="UP000001940"/>
    </source>
</evidence>
<evidence type="ECO:0000312" key="12">
    <source>
        <dbReference type="WormBase" id="ZK328.1a"/>
    </source>
</evidence>
<evidence type="ECO:0000312" key="13">
    <source>
        <dbReference type="WormBase" id="ZK328.1b"/>
    </source>
</evidence>
<protein>
    <recommendedName>
        <fullName evidence="10">Ubiquitin carboxyl-terminal hydrolase cyk-3</fullName>
        <ecNumber evidence="5 6">3.4.19.12</ecNumber>
    </recommendedName>
    <alternativeName>
        <fullName evidence="8">CeUBP130</fullName>
    </alternativeName>
    <alternativeName>
        <fullName evidence="9 13">Cytokinesis defective protein 3</fullName>
    </alternativeName>
</protein>
<accession>Q8WT44</accession>
<accession>G5EDU8</accession>
<reference key="1">
    <citation type="journal article" date="2002" name="J. Cell Sci.">
        <title>A ubiquitin C-terminal hydrolase is required to maintain osmotic balance and execute actin-dependent processes in the early C. elegans embryo.</title>
        <authorList>
            <person name="Kaitna S."/>
            <person name="Schnabel H."/>
            <person name="Schnabel R."/>
            <person name="Hyman A.A."/>
            <person name="Glotzer M."/>
        </authorList>
    </citation>
    <scope>NUCLEOTIDE SEQUENCE [MRNA] (ISOFORM A)</scope>
    <scope>FUNCTION</scope>
    <scope>CATALYTIC ACTIVITY</scope>
    <scope>MUTAGENESIS OF 98-GLN--LYS-1178</scope>
</reference>
<reference key="2">
    <citation type="journal article" date="1998" name="Science">
        <title>Genome sequence of the nematode C. elegans: a platform for investigating biology.</title>
        <authorList>
            <consortium name="The C. elegans sequencing consortium"/>
        </authorList>
    </citation>
    <scope>NUCLEOTIDE SEQUENCE [LARGE SCALE GENOMIC DNA]</scope>
    <source>
        <strain evidence="11">Bristol N2</strain>
    </source>
</reference>
<reference key="3">
    <citation type="journal article" date="2001" name="Genes Cells">
        <title>A deubiquitinating enzyme, UCH/CeUBP130, has an essential role in the formation of a functional microtubule-organizing centre (MTOC) during early cleavage in C. elegans.</title>
        <authorList>
            <person name="Lee J."/>
            <person name="Jee C."/>
            <person name="Lee J.I."/>
            <person name="Lee M.H."/>
            <person name="Lee M.H."/>
            <person name="Koo H.S."/>
            <person name="Chung C.H."/>
            <person name="Ahnn J."/>
        </authorList>
    </citation>
    <scope>FUNCTION</scope>
    <scope>CATALYTIC ACTIVITY</scope>
    <scope>SUBCELLULAR LOCATION</scope>
    <scope>TISSUE SPECIFICITY</scope>
    <scope>DEVELOPMENTAL STAGE</scope>
    <scope>DISRUPTION PHENOTYPE</scope>
    <scope>MUTAGENESIS OF 2-GLY--SER-255; 2-GLY--GLU-444 AND PHE-1135</scope>
</reference>
<reference key="4">
    <citation type="journal article" date="2022" name="Cell Rep.">
        <title>USP32-regulated LAMTOR1 ubiquitination impacts mTORC1 activation and autophagy induction.</title>
        <authorList>
            <person name="Hertel A."/>
            <person name="Alves L.M."/>
            <person name="Dutz H."/>
            <person name="Tascher G."/>
            <person name="Bonn F."/>
            <person name="Kaulich M."/>
            <person name="Dikic I."/>
            <person name="Eimer S."/>
            <person name="Steinberg F."/>
            <person name="Bremm A."/>
        </authorList>
    </citation>
    <scope>FUNCTION</scope>
</reference>
<feature type="chain" id="PRO_0000444675" description="Ubiquitin carboxyl-terminal hydrolase cyk-3">
    <location>
        <begin position="1"/>
        <end position="1178"/>
    </location>
</feature>
<feature type="domain" description="EF-hand 1" evidence="1">
    <location>
        <begin position="28"/>
        <end position="60"/>
    </location>
</feature>
<feature type="domain" description="EF-hand 2" evidence="1">
    <location>
        <begin position="175"/>
        <end position="210"/>
    </location>
</feature>
<feature type="domain" description="EF-hand 3" evidence="1">
    <location>
        <begin position="211"/>
        <end position="246"/>
    </location>
</feature>
<feature type="domain" description="DUSP" evidence="2">
    <location>
        <begin position="296"/>
        <end position="410"/>
    </location>
</feature>
<feature type="domain" description="USP" evidence="3">
    <location>
        <begin position="570"/>
        <end position="1175"/>
    </location>
</feature>
<feature type="region of interest" description="Disordered" evidence="4">
    <location>
        <begin position="681"/>
        <end position="725"/>
    </location>
</feature>
<feature type="active site" description="Nucleophile" evidence="3">
    <location>
        <position position="579"/>
    </location>
</feature>
<feature type="active site" description="Proton acceptor" evidence="3">
    <location>
        <position position="1134"/>
    </location>
</feature>
<feature type="binding site" evidence="1">
    <location>
        <position position="188"/>
    </location>
    <ligand>
        <name>Ca(2+)</name>
        <dbReference type="ChEBI" id="CHEBI:29108"/>
        <label>1</label>
    </ligand>
</feature>
<feature type="binding site" evidence="1">
    <location>
        <position position="190"/>
    </location>
    <ligand>
        <name>Ca(2+)</name>
        <dbReference type="ChEBI" id="CHEBI:29108"/>
        <label>1</label>
    </ligand>
</feature>
<feature type="binding site" evidence="1">
    <location>
        <position position="192"/>
    </location>
    <ligand>
        <name>Ca(2+)</name>
        <dbReference type="ChEBI" id="CHEBI:29108"/>
        <label>1</label>
    </ligand>
</feature>
<feature type="binding site" evidence="1">
    <location>
        <position position="194"/>
    </location>
    <ligand>
        <name>Ca(2+)</name>
        <dbReference type="ChEBI" id="CHEBI:29108"/>
        <label>1</label>
    </ligand>
</feature>
<feature type="binding site" evidence="1">
    <location>
        <position position="199"/>
    </location>
    <ligand>
        <name>Ca(2+)</name>
        <dbReference type="ChEBI" id="CHEBI:29108"/>
        <label>1</label>
    </ligand>
</feature>
<feature type="binding site" evidence="1">
    <location>
        <position position="224"/>
    </location>
    <ligand>
        <name>Ca(2+)</name>
        <dbReference type="ChEBI" id="CHEBI:29108"/>
        <label>2</label>
    </ligand>
</feature>
<feature type="binding site" evidence="1">
    <location>
        <position position="226"/>
    </location>
    <ligand>
        <name>Ca(2+)</name>
        <dbReference type="ChEBI" id="CHEBI:29108"/>
        <label>2</label>
    </ligand>
</feature>
<feature type="binding site" evidence="1">
    <location>
        <position position="228"/>
    </location>
    <ligand>
        <name>Ca(2+)</name>
        <dbReference type="ChEBI" id="CHEBI:29108"/>
        <label>2</label>
    </ligand>
</feature>
<feature type="binding site" evidence="1">
    <location>
        <position position="235"/>
    </location>
    <ligand>
        <name>Ca(2+)</name>
        <dbReference type="ChEBI" id="CHEBI:29108"/>
        <label>2</label>
    </ligand>
</feature>
<feature type="splice variant" id="VSP_059638" description="In isoform a." evidence="10">
    <location>
        <begin position="561"/>
        <end position="563"/>
    </location>
</feature>
<feature type="mutagenesis site" description="Lacks catalytic activity in vitro. Catalytic activity is restored; when associated with Y-1135." evidence="5">
    <location>
        <begin position="2"/>
        <end position="444"/>
    </location>
</feature>
<feature type="mutagenesis site" description="Lacks catalytic activity in vitro. Catalytic activity is restored; when associated with Y-1135." evidence="5">
    <location>
        <begin position="2"/>
        <end position="255"/>
    </location>
</feature>
<feature type="mutagenesis site" description="Cytokinesis is impaired during the embryonic first mitotic division. Specifically, lacks membrane contraction and pseudocleavage. Fails to extrude polar bodies. Fails to segregate P-granules to the posterior cortex. Redistribution of cortical actin to form an anterior actin cap after pronuclear migration is impaired as well as the actin-myosin-mediated polarization of yolk granules. During late anaphase, the formation of actin contractile ring is partially impaired. Impaired osmoregulation causing embryos to swell." evidence="6">
    <location>
        <begin position="98"/>
        <end position="1178"/>
    </location>
</feature>
<feature type="mutagenesis site" description="Catalytic activity is restored; when associated with 2-G-S-255 DEL or 2-G-E-444 DEL." evidence="5">
    <original>F</original>
    <variation>Y</variation>
    <location>
        <position position="1135"/>
    </location>
</feature>